<protein>
    <recommendedName>
        <fullName>Movement protein TGBp3</fullName>
    </recommendedName>
    <alternativeName>
        <fullName>13 kDa protein</fullName>
    </alternativeName>
    <alternativeName>
        <fullName>Triple gene block 3 protein</fullName>
        <shortName>TGBp3</shortName>
    </alternativeName>
</protein>
<dbReference type="EMBL" id="Z21647">
    <property type="protein sequence ID" value="CAA79764.1"/>
    <property type="molecule type" value="Genomic_RNA"/>
</dbReference>
<dbReference type="EMBL" id="S61526">
    <property type="protein sequence ID" value="AAB26350.1"/>
    <property type="molecule type" value="Genomic_RNA"/>
</dbReference>
<dbReference type="PIR" id="S34233">
    <property type="entry name" value="S34233"/>
</dbReference>
<dbReference type="RefSeq" id="NP_620839.1">
    <property type="nucleotide sequence ID" value="NC_003849.1"/>
</dbReference>
<dbReference type="KEGG" id="vg:944431"/>
<dbReference type="Proteomes" id="UP000009190">
    <property type="component" value="Genome"/>
</dbReference>
<dbReference type="GO" id="GO:0044167">
    <property type="term" value="C:host cell endoplasmic reticulum membrane"/>
    <property type="evidence" value="ECO:0007669"/>
    <property type="project" value="UniProtKB-SubCell"/>
</dbReference>
<dbReference type="GO" id="GO:0016020">
    <property type="term" value="C:membrane"/>
    <property type="evidence" value="ECO:0007669"/>
    <property type="project" value="UniProtKB-KW"/>
</dbReference>
<dbReference type="GO" id="GO:0046740">
    <property type="term" value="P:transport of virus in host, cell to cell"/>
    <property type="evidence" value="ECO:0007669"/>
    <property type="project" value="UniProtKB-KW"/>
</dbReference>
<dbReference type="InterPro" id="IPR003411">
    <property type="entry name" value="TGBp3"/>
</dbReference>
<dbReference type="Pfam" id="PF02495">
    <property type="entry name" value="TGBp3"/>
    <property type="match status" value="1"/>
</dbReference>
<evidence type="ECO:0000250" key="1"/>
<evidence type="ECO:0000255" key="2"/>
<evidence type="ECO:0000256" key="3">
    <source>
        <dbReference type="SAM" id="MobiDB-lite"/>
    </source>
</evidence>
<evidence type="ECO:0000305" key="4"/>
<gene>
    <name type="ORF">ORF4</name>
</gene>
<sequence>MHYPTEADTSTGPNPSATSAPVRPRHVTPSLSPSSSSSPSPDSFYYFLAAAVILTAALAAALLTPNPGCTIVITGHTTIIQGSCPIPPQLVLAAHPRGLSLEQYLKFTNTLPDGSQHRSHR</sequence>
<reference key="1">
    <citation type="journal article" date="1994" name="J. Gen. Virol.">
        <title>Genome characterization and taxonomy of Plantago asiatica mosaic potexvirus.</title>
        <authorList>
            <person name="Solovyev A.G."/>
            <person name="Novikov V.K."/>
            <person name="Merits A."/>
            <person name="Savenkov E.I."/>
            <person name="Zelenina D.A."/>
            <person name="Tyulkina L.G."/>
            <person name="Morozov S.Y."/>
        </authorList>
    </citation>
    <scope>NUCLEOTIDE SEQUENCE [GENOMIC RNA]</scope>
</reference>
<reference key="2">
    <citation type="journal article" date="1993" name="Dokl. Akad. Nauk">
        <title>Primary structure of the triple block RNA genes of the Plantago asiatica mosaic virus.</title>
        <authorList>
            <person name="Solovyev A.G."/>
            <person name="Novikov V.K."/>
            <person name="Morozov S.I."/>
            <person name="Kagramanov V.N."/>
            <person name="Atabekov I.G."/>
        </authorList>
    </citation>
    <scope>NUCLEOTIDE SEQUENCE [GENOMIC RNA]</scope>
</reference>
<feature type="chain" id="PRO_0000222618" description="Movement protein TGBp3">
    <location>
        <begin position="1"/>
        <end position="121"/>
    </location>
</feature>
<feature type="topological domain" description="Lumenal" evidence="2">
    <location>
        <begin position="1"/>
        <end position="43"/>
    </location>
</feature>
<feature type="transmembrane region" description="Helical" evidence="2">
    <location>
        <begin position="44"/>
        <end position="64"/>
    </location>
</feature>
<feature type="topological domain" description="Cytoplasmic" evidence="2">
    <location>
        <begin position="65"/>
        <end position="121"/>
    </location>
</feature>
<feature type="region of interest" description="Disordered" evidence="3">
    <location>
        <begin position="1"/>
        <end position="40"/>
    </location>
</feature>
<feature type="compositionally biased region" description="Polar residues" evidence="3">
    <location>
        <begin position="7"/>
        <end position="19"/>
    </location>
</feature>
<feature type="compositionally biased region" description="Low complexity" evidence="3">
    <location>
        <begin position="29"/>
        <end position="40"/>
    </location>
</feature>
<name>TGB3_P1AMV</name>
<proteinExistence type="inferred from homology"/>
<keyword id="KW-1038">Host endoplasmic reticulum</keyword>
<keyword id="KW-1043">Host membrane</keyword>
<keyword id="KW-0472">Membrane</keyword>
<keyword id="KW-1185">Reference proteome</keyword>
<keyword id="KW-0812">Transmembrane</keyword>
<keyword id="KW-1133">Transmembrane helix</keyword>
<keyword id="KW-0813">Transport</keyword>
<keyword id="KW-0916">Viral movement protein</keyword>
<organismHost>
    <name type="scientific">Plantago asiatica</name>
    <dbReference type="NCBI Taxonomy" id="197796"/>
</organismHost>
<organism>
    <name type="scientific">Plantago asiatica mosaic potexvirus</name>
    <name type="common">P1AMV</name>
    <dbReference type="NCBI Taxonomy" id="28354"/>
    <lineage>
        <taxon>Viruses</taxon>
        <taxon>Riboviria</taxon>
        <taxon>Orthornavirae</taxon>
        <taxon>Kitrinoviricota</taxon>
        <taxon>Alsuviricetes</taxon>
        <taxon>Tymovirales</taxon>
        <taxon>Alphaflexiviridae</taxon>
        <taxon>Potexvirus</taxon>
    </lineage>
</organism>
<comment type="function">
    <text evidence="1">Plays a role in viral cell-to-cell propagation, by facilitating genome transport to neighboring plant cells through plasmosdesmata. May induce the formation of granular vesicles derived from the Endoplasmic reticulum, which align on actin filaments (By similarity).</text>
</comment>
<comment type="subcellular location">
    <subcellularLocation>
        <location evidence="1">Host endoplasmic reticulum membrane</location>
    </subcellularLocation>
</comment>
<comment type="miscellaneous">
    <text>TGBp1, TGBp2 and TGBp3 seem to act together for cell-to-cell propagation. TGBp1 is the main movement protein that physically cross the plasmodesma with the viral genome. TGBp2 and TGBp3 would facilitate TGBp1 function.</text>
</comment>
<comment type="similarity">
    <text evidence="4">Belongs to the Tymovirales TGBp3 protein family.</text>
</comment>
<accession>Q07520</accession>